<organism>
    <name type="scientific">Pseudomonas aeruginosa (strain LESB58)</name>
    <dbReference type="NCBI Taxonomy" id="557722"/>
    <lineage>
        <taxon>Bacteria</taxon>
        <taxon>Pseudomonadati</taxon>
        <taxon>Pseudomonadota</taxon>
        <taxon>Gammaproteobacteria</taxon>
        <taxon>Pseudomonadales</taxon>
        <taxon>Pseudomonadaceae</taxon>
        <taxon>Pseudomonas</taxon>
    </lineage>
</organism>
<dbReference type="EC" id="1.17.7.3" evidence="1"/>
<dbReference type="EMBL" id="FM209186">
    <property type="protein sequence ID" value="CAW25898.1"/>
    <property type="molecule type" value="Genomic_DNA"/>
</dbReference>
<dbReference type="RefSeq" id="WP_003092800.1">
    <property type="nucleotide sequence ID" value="NC_011770.1"/>
</dbReference>
<dbReference type="SMR" id="B7UWI8"/>
<dbReference type="KEGG" id="pag:PLES_11711"/>
<dbReference type="HOGENOM" id="CLU_042258_0_0_6"/>
<dbReference type="UniPathway" id="UPA00056">
    <property type="reaction ID" value="UER00096"/>
</dbReference>
<dbReference type="GO" id="GO:0051539">
    <property type="term" value="F:4 iron, 4 sulfur cluster binding"/>
    <property type="evidence" value="ECO:0007669"/>
    <property type="project" value="UniProtKB-UniRule"/>
</dbReference>
<dbReference type="GO" id="GO:0046429">
    <property type="term" value="F:4-hydroxy-3-methylbut-2-en-1-yl diphosphate synthase activity (ferredoxin)"/>
    <property type="evidence" value="ECO:0007669"/>
    <property type="project" value="UniProtKB-UniRule"/>
</dbReference>
<dbReference type="GO" id="GO:0141197">
    <property type="term" value="F:4-hydroxy-3-methylbut-2-enyl-diphosphate synthase activity (flavodoxin)"/>
    <property type="evidence" value="ECO:0007669"/>
    <property type="project" value="UniProtKB-EC"/>
</dbReference>
<dbReference type="GO" id="GO:0005506">
    <property type="term" value="F:iron ion binding"/>
    <property type="evidence" value="ECO:0007669"/>
    <property type="project" value="InterPro"/>
</dbReference>
<dbReference type="GO" id="GO:0019288">
    <property type="term" value="P:isopentenyl diphosphate biosynthetic process, methylerythritol 4-phosphate pathway"/>
    <property type="evidence" value="ECO:0007669"/>
    <property type="project" value="UniProtKB-UniRule"/>
</dbReference>
<dbReference type="GO" id="GO:0016114">
    <property type="term" value="P:terpenoid biosynthetic process"/>
    <property type="evidence" value="ECO:0007669"/>
    <property type="project" value="InterPro"/>
</dbReference>
<dbReference type="FunFam" id="3.20.20.20:FF:000001">
    <property type="entry name" value="4-hydroxy-3-methylbut-2-en-1-yl diphosphate synthase (flavodoxin)"/>
    <property type="match status" value="1"/>
</dbReference>
<dbReference type="Gene3D" id="3.20.20.20">
    <property type="entry name" value="Dihydropteroate synthase-like"/>
    <property type="match status" value="1"/>
</dbReference>
<dbReference type="Gene3D" id="3.30.413.10">
    <property type="entry name" value="Sulfite Reductase Hemoprotein, domain 1"/>
    <property type="match status" value="1"/>
</dbReference>
<dbReference type="HAMAP" id="MF_00159">
    <property type="entry name" value="IspG"/>
    <property type="match status" value="1"/>
</dbReference>
<dbReference type="InterPro" id="IPR011005">
    <property type="entry name" value="Dihydropteroate_synth-like_sf"/>
</dbReference>
<dbReference type="InterPro" id="IPR016425">
    <property type="entry name" value="IspG_bac"/>
</dbReference>
<dbReference type="InterPro" id="IPR004588">
    <property type="entry name" value="IspG_bac-typ"/>
</dbReference>
<dbReference type="InterPro" id="IPR045854">
    <property type="entry name" value="NO2/SO3_Rdtase_4Fe4S_sf"/>
</dbReference>
<dbReference type="NCBIfam" id="TIGR00612">
    <property type="entry name" value="ispG_gcpE"/>
    <property type="match status" value="1"/>
</dbReference>
<dbReference type="NCBIfam" id="NF001540">
    <property type="entry name" value="PRK00366.1"/>
    <property type="match status" value="1"/>
</dbReference>
<dbReference type="PANTHER" id="PTHR30454">
    <property type="entry name" value="4-HYDROXY-3-METHYLBUT-2-EN-1-YL DIPHOSPHATE SYNTHASE"/>
    <property type="match status" value="1"/>
</dbReference>
<dbReference type="PANTHER" id="PTHR30454:SF0">
    <property type="entry name" value="4-HYDROXY-3-METHYLBUT-2-EN-1-YL DIPHOSPHATE SYNTHASE (FERREDOXIN), CHLOROPLASTIC"/>
    <property type="match status" value="1"/>
</dbReference>
<dbReference type="Pfam" id="PF04551">
    <property type="entry name" value="GcpE"/>
    <property type="match status" value="1"/>
</dbReference>
<dbReference type="PIRSF" id="PIRSF004640">
    <property type="entry name" value="IspG"/>
    <property type="match status" value="1"/>
</dbReference>
<dbReference type="SUPFAM" id="SSF51717">
    <property type="entry name" value="Dihydropteroate synthetase-like"/>
    <property type="match status" value="1"/>
</dbReference>
<dbReference type="SUPFAM" id="SSF56014">
    <property type="entry name" value="Nitrite and sulphite reductase 4Fe-4S domain-like"/>
    <property type="match status" value="1"/>
</dbReference>
<proteinExistence type="inferred from homology"/>
<accession>B7UWI8</accession>
<comment type="function">
    <text evidence="1">Converts 2C-methyl-D-erythritol 2,4-cyclodiphosphate (ME-2,4cPP) into 1-hydroxy-2-methyl-2-(E)-butenyl 4-diphosphate.</text>
</comment>
<comment type="catalytic activity">
    <reaction evidence="1">
        <text>(2E)-4-hydroxy-3-methylbut-2-enyl diphosphate + oxidized [flavodoxin] + H2O + 2 H(+) = 2-C-methyl-D-erythritol 2,4-cyclic diphosphate + reduced [flavodoxin]</text>
        <dbReference type="Rhea" id="RHEA:43604"/>
        <dbReference type="Rhea" id="RHEA-COMP:10622"/>
        <dbReference type="Rhea" id="RHEA-COMP:10623"/>
        <dbReference type="ChEBI" id="CHEBI:15377"/>
        <dbReference type="ChEBI" id="CHEBI:15378"/>
        <dbReference type="ChEBI" id="CHEBI:57618"/>
        <dbReference type="ChEBI" id="CHEBI:58210"/>
        <dbReference type="ChEBI" id="CHEBI:58483"/>
        <dbReference type="ChEBI" id="CHEBI:128753"/>
        <dbReference type="EC" id="1.17.7.3"/>
    </reaction>
</comment>
<comment type="cofactor">
    <cofactor evidence="1">
        <name>[4Fe-4S] cluster</name>
        <dbReference type="ChEBI" id="CHEBI:49883"/>
    </cofactor>
    <text evidence="1">Binds 1 [4Fe-4S] cluster.</text>
</comment>
<comment type="pathway">
    <text evidence="1">Isoprenoid biosynthesis; isopentenyl diphosphate biosynthesis via DXP pathway; isopentenyl diphosphate from 1-deoxy-D-xylulose 5-phosphate: step 5/6.</text>
</comment>
<comment type="similarity">
    <text evidence="1">Belongs to the IspG family.</text>
</comment>
<feature type="chain" id="PRO_1000191086" description="4-hydroxy-3-methylbut-2-en-1-yl diphosphate synthase (flavodoxin)">
    <location>
        <begin position="1"/>
        <end position="371"/>
    </location>
</feature>
<feature type="binding site" evidence="1">
    <location>
        <position position="272"/>
    </location>
    <ligand>
        <name>[4Fe-4S] cluster</name>
        <dbReference type="ChEBI" id="CHEBI:49883"/>
    </ligand>
</feature>
<feature type="binding site" evidence="1">
    <location>
        <position position="275"/>
    </location>
    <ligand>
        <name>[4Fe-4S] cluster</name>
        <dbReference type="ChEBI" id="CHEBI:49883"/>
    </ligand>
</feature>
<feature type="binding site" evidence="1">
    <location>
        <position position="307"/>
    </location>
    <ligand>
        <name>[4Fe-4S] cluster</name>
        <dbReference type="ChEBI" id="CHEBI:49883"/>
    </ligand>
</feature>
<feature type="binding site" evidence="1">
    <location>
        <position position="314"/>
    </location>
    <ligand>
        <name>[4Fe-4S] cluster</name>
        <dbReference type="ChEBI" id="CHEBI:49883"/>
    </ligand>
</feature>
<reference key="1">
    <citation type="journal article" date="2009" name="Genome Res.">
        <title>Newly introduced genomic prophage islands are critical determinants of in vivo competitiveness in the Liverpool epidemic strain of Pseudomonas aeruginosa.</title>
        <authorList>
            <person name="Winstanley C."/>
            <person name="Langille M.G.I."/>
            <person name="Fothergill J.L."/>
            <person name="Kukavica-Ibrulj I."/>
            <person name="Paradis-Bleau C."/>
            <person name="Sanschagrin F."/>
            <person name="Thomson N.R."/>
            <person name="Winsor G.L."/>
            <person name="Quail M.A."/>
            <person name="Lennard N."/>
            <person name="Bignell A."/>
            <person name="Clarke L."/>
            <person name="Seeger K."/>
            <person name="Saunders D."/>
            <person name="Harris D."/>
            <person name="Parkhill J."/>
            <person name="Hancock R.E.W."/>
            <person name="Brinkman F.S.L."/>
            <person name="Levesque R.C."/>
        </authorList>
    </citation>
    <scope>NUCLEOTIDE SEQUENCE [LARGE SCALE GENOMIC DNA]</scope>
    <source>
        <strain>LESB58</strain>
    </source>
</reference>
<name>ISPG_PSEA8</name>
<gene>
    <name evidence="1" type="primary">ispG</name>
    <name type="ordered locus">PLES_11711</name>
</gene>
<keyword id="KW-0004">4Fe-4S</keyword>
<keyword id="KW-0408">Iron</keyword>
<keyword id="KW-0411">Iron-sulfur</keyword>
<keyword id="KW-0414">Isoprene biosynthesis</keyword>
<keyword id="KW-0479">Metal-binding</keyword>
<keyword id="KW-0560">Oxidoreductase</keyword>
<evidence type="ECO:0000255" key="1">
    <source>
        <dbReference type="HAMAP-Rule" id="MF_00159"/>
    </source>
</evidence>
<protein>
    <recommendedName>
        <fullName evidence="1">4-hydroxy-3-methylbut-2-en-1-yl diphosphate synthase (flavodoxin)</fullName>
        <ecNumber evidence="1">1.17.7.3</ecNumber>
    </recommendedName>
    <alternativeName>
        <fullName evidence="1">1-hydroxy-2-methyl-2-(E)-butenyl 4-diphosphate synthase</fullName>
    </alternativeName>
</protein>
<sequence>MSIHSASPIIRRKSRKIWVGNVPVGGDAPIAVQSMTNTETCDVAATVAQIRRLEDAGADIVRVSVPDMDAAEAFGKIKQQVNVPLVADIHFDYRIALRVAELGVDCLRINPGNIGREDRVKAVVDAARERNIPIRIGVNAGSLEKDLQKKYGEPTPEALLESAMRHVDHLDKLDFQNFKVSVKASDVFMAVAAYRLLARQIEQPLHLGITEAGGLRSGTVKSAVGLGMLLAEGIGDTIRISLAADPVEEIKVGFDILKSLHLRSRGINFIACPSCSRQNFDVVKTMNELEGRLEDLLVPMDVAVIGCVVNGPGEAKEAHVGLTGGTPNLVYIDGKPSQKLTNDNLVDELERLIRQKAAEKAEADASLIARG</sequence>